<proteinExistence type="inferred from homology"/>
<organism>
    <name type="scientific">Shigella dysenteriae serotype 1 (strain Sd197)</name>
    <dbReference type="NCBI Taxonomy" id="300267"/>
    <lineage>
        <taxon>Bacteria</taxon>
        <taxon>Pseudomonadati</taxon>
        <taxon>Pseudomonadota</taxon>
        <taxon>Gammaproteobacteria</taxon>
        <taxon>Enterobacterales</taxon>
        <taxon>Enterobacteriaceae</taxon>
        <taxon>Shigella</taxon>
    </lineage>
</organism>
<reference key="1">
    <citation type="journal article" date="2005" name="Nucleic Acids Res.">
        <title>Genome dynamics and diversity of Shigella species, the etiologic agents of bacillary dysentery.</title>
        <authorList>
            <person name="Yang F."/>
            <person name="Yang J."/>
            <person name="Zhang X."/>
            <person name="Chen L."/>
            <person name="Jiang Y."/>
            <person name="Yan Y."/>
            <person name="Tang X."/>
            <person name="Wang J."/>
            <person name="Xiong Z."/>
            <person name="Dong J."/>
            <person name="Xue Y."/>
            <person name="Zhu Y."/>
            <person name="Xu X."/>
            <person name="Sun L."/>
            <person name="Chen S."/>
            <person name="Nie H."/>
            <person name="Peng J."/>
            <person name="Xu J."/>
            <person name="Wang Y."/>
            <person name="Yuan Z."/>
            <person name="Wen Y."/>
            <person name="Yao Z."/>
            <person name="Shen Y."/>
            <person name="Qiang B."/>
            <person name="Hou Y."/>
            <person name="Yu J."/>
            <person name="Jin Q."/>
        </authorList>
    </citation>
    <scope>NUCLEOTIDE SEQUENCE [LARGE SCALE GENOMIC DNA]</scope>
    <source>
        <strain>Sd197</strain>
    </source>
</reference>
<gene>
    <name evidence="1" type="primary">coaA</name>
    <name type="ordered locus">SDY_3754</name>
</gene>
<feature type="chain" id="PRO_1000043258" description="Pantothenate kinase">
    <location>
        <begin position="1"/>
        <end position="316"/>
    </location>
</feature>
<feature type="binding site" evidence="1">
    <location>
        <begin position="95"/>
        <end position="102"/>
    </location>
    <ligand>
        <name>ATP</name>
        <dbReference type="ChEBI" id="CHEBI:30616"/>
    </ligand>
</feature>
<sequence length="316" mass="36288">MSIKEQTLMTPYLQFDRNQWAALRDSVPMTLSEDEIARLKGINEDLSLEEVAEIYLPLSRLLNFYISSNLRRQAVLEQFLGTNGQRIPYIISIAGSVAVGKSTTARVLQALLSRWPEHRRVELITTDGFLHPNQVLKERGLMKKKGFPESYDMHRLVKFVSDLKSGVPNVTAPVYSHLIYDVIPDGDKTVVQPDILILEGLNVLQSGMDYPHDPHHVFVSDFVDFSIYVDAPEDLLQTWYINRFLKFREGAFTDPDSYFHNYAKLTKEEAIKTAMTLWKEINWLNLKQNILPTRGRASLILTKSANHAVEEVRLRK</sequence>
<comment type="catalytic activity">
    <reaction evidence="1">
        <text>(R)-pantothenate + ATP = (R)-4'-phosphopantothenate + ADP + H(+)</text>
        <dbReference type="Rhea" id="RHEA:16373"/>
        <dbReference type="ChEBI" id="CHEBI:10986"/>
        <dbReference type="ChEBI" id="CHEBI:15378"/>
        <dbReference type="ChEBI" id="CHEBI:29032"/>
        <dbReference type="ChEBI" id="CHEBI:30616"/>
        <dbReference type="ChEBI" id="CHEBI:456216"/>
        <dbReference type="EC" id="2.7.1.33"/>
    </reaction>
</comment>
<comment type="pathway">
    <text evidence="1">Cofactor biosynthesis; coenzyme A biosynthesis; CoA from (R)-pantothenate: step 1/5.</text>
</comment>
<comment type="subcellular location">
    <subcellularLocation>
        <location evidence="1">Cytoplasm</location>
    </subcellularLocation>
</comment>
<comment type="similarity">
    <text evidence="1">Belongs to the prokaryotic pantothenate kinase family.</text>
</comment>
<accession>Q32AF0</accession>
<evidence type="ECO:0000255" key="1">
    <source>
        <dbReference type="HAMAP-Rule" id="MF_00215"/>
    </source>
</evidence>
<dbReference type="EC" id="2.7.1.33" evidence="1"/>
<dbReference type="EMBL" id="CP000034">
    <property type="protein sequence ID" value="ABB63705.1"/>
    <property type="molecule type" value="Genomic_DNA"/>
</dbReference>
<dbReference type="RefSeq" id="WP_000023084.1">
    <property type="nucleotide sequence ID" value="NC_007606.1"/>
</dbReference>
<dbReference type="RefSeq" id="YP_405196.1">
    <property type="nucleotide sequence ID" value="NC_007606.1"/>
</dbReference>
<dbReference type="SMR" id="Q32AF0"/>
<dbReference type="STRING" id="300267.SDY_3754"/>
<dbReference type="EnsemblBacteria" id="ABB63705">
    <property type="protein sequence ID" value="ABB63705"/>
    <property type="gene ID" value="SDY_3754"/>
</dbReference>
<dbReference type="KEGG" id="sdy:SDY_3754"/>
<dbReference type="PATRIC" id="fig|300267.13.peg.4445"/>
<dbReference type="HOGENOM" id="CLU_053818_1_1_6"/>
<dbReference type="UniPathway" id="UPA00241">
    <property type="reaction ID" value="UER00352"/>
</dbReference>
<dbReference type="Proteomes" id="UP000002716">
    <property type="component" value="Chromosome"/>
</dbReference>
<dbReference type="GO" id="GO:0005737">
    <property type="term" value="C:cytoplasm"/>
    <property type="evidence" value="ECO:0007669"/>
    <property type="project" value="UniProtKB-SubCell"/>
</dbReference>
<dbReference type="GO" id="GO:0005524">
    <property type="term" value="F:ATP binding"/>
    <property type="evidence" value="ECO:0007669"/>
    <property type="project" value="UniProtKB-UniRule"/>
</dbReference>
<dbReference type="GO" id="GO:0004594">
    <property type="term" value="F:pantothenate kinase activity"/>
    <property type="evidence" value="ECO:0007669"/>
    <property type="project" value="UniProtKB-UniRule"/>
</dbReference>
<dbReference type="GO" id="GO:0015937">
    <property type="term" value="P:coenzyme A biosynthetic process"/>
    <property type="evidence" value="ECO:0007669"/>
    <property type="project" value="UniProtKB-UniRule"/>
</dbReference>
<dbReference type="CDD" id="cd02025">
    <property type="entry name" value="PanK"/>
    <property type="match status" value="1"/>
</dbReference>
<dbReference type="FunFam" id="3.40.50.300:FF:000242">
    <property type="entry name" value="Pantothenate kinase"/>
    <property type="match status" value="1"/>
</dbReference>
<dbReference type="Gene3D" id="3.40.50.300">
    <property type="entry name" value="P-loop containing nucleotide triphosphate hydrolases"/>
    <property type="match status" value="1"/>
</dbReference>
<dbReference type="HAMAP" id="MF_00215">
    <property type="entry name" value="Pantothen_kinase_1"/>
    <property type="match status" value="1"/>
</dbReference>
<dbReference type="InterPro" id="IPR027417">
    <property type="entry name" value="P-loop_NTPase"/>
</dbReference>
<dbReference type="InterPro" id="IPR004566">
    <property type="entry name" value="PanK"/>
</dbReference>
<dbReference type="InterPro" id="IPR006083">
    <property type="entry name" value="PRK/URK"/>
</dbReference>
<dbReference type="NCBIfam" id="TIGR00554">
    <property type="entry name" value="panK_bact"/>
    <property type="match status" value="1"/>
</dbReference>
<dbReference type="PANTHER" id="PTHR10285">
    <property type="entry name" value="URIDINE KINASE"/>
    <property type="match status" value="1"/>
</dbReference>
<dbReference type="Pfam" id="PF00485">
    <property type="entry name" value="PRK"/>
    <property type="match status" value="1"/>
</dbReference>
<dbReference type="PIRSF" id="PIRSF000545">
    <property type="entry name" value="Pantothenate_kin"/>
    <property type="match status" value="1"/>
</dbReference>
<dbReference type="SUPFAM" id="SSF52540">
    <property type="entry name" value="P-loop containing nucleoside triphosphate hydrolases"/>
    <property type="match status" value="1"/>
</dbReference>
<keyword id="KW-0067">ATP-binding</keyword>
<keyword id="KW-0173">Coenzyme A biosynthesis</keyword>
<keyword id="KW-0963">Cytoplasm</keyword>
<keyword id="KW-0418">Kinase</keyword>
<keyword id="KW-0547">Nucleotide-binding</keyword>
<keyword id="KW-1185">Reference proteome</keyword>
<keyword id="KW-0808">Transferase</keyword>
<name>COAA_SHIDS</name>
<protein>
    <recommendedName>
        <fullName evidence="1">Pantothenate kinase</fullName>
        <ecNumber evidence="1">2.7.1.33</ecNumber>
    </recommendedName>
    <alternativeName>
        <fullName evidence="1">Pantothenic acid kinase</fullName>
    </alternativeName>
</protein>